<protein>
    <recommendedName>
        <fullName evidence="1">GMP synthase [glutamine-hydrolyzing]</fullName>
        <ecNumber evidence="1">6.3.5.2</ecNumber>
    </recommendedName>
    <alternativeName>
        <fullName evidence="1">GMP synthetase</fullName>
    </alternativeName>
    <alternativeName>
        <fullName evidence="1">Glutamine amidotransferase</fullName>
    </alternativeName>
</protein>
<keyword id="KW-0067">ATP-binding</keyword>
<keyword id="KW-0315">Glutamine amidotransferase</keyword>
<keyword id="KW-0332">GMP biosynthesis</keyword>
<keyword id="KW-0436">Ligase</keyword>
<keyword id="KW-0547">Nucleotide-binding</keyword>
<keyword id="KW-0658">Purine biosynthesis</keyword>
<sequence length="503" mass="55377">MRPVLVVDFGSQYSQLVVRAIRECGYYAEFASPSISAAECLALSPIAIFLSGGPASAYKDNAPKLDEEIFNCGIPIFGICYGFQLLAQAFGGSVKKANAPEYGPADITIVNKAFFSGQPDRQTVWMSHGDSVIRAPKNFCILSTSQDAVLSFCNRDRTIAGVQWHPEVKHSRFGKHTIKAFLSSFAAPNWDPEQTICGTVDSIRKTVGCKRVLCALSGGVDSVVAATLTHRAIGDRLRCVFVDHGLLRLNEREQVEEYCSSLGLNVSTYDASDCFLSALSGIRDSEQKRKVIGREFIACFSKLQERFDIKPHFLLQGTLYPDLVESGATPGGATIKSHHNVGGLSDNLGFELLEPLKYLFKDEVRKIGLQLGIPKHIVHRQPFPGPGLAIRIIGEVTNKKLSILRAADAIVRHELRDWTDIWQCPVILLSDVQSVGVRGDSRSCGFPIVIRPVSSDDAMTADWYRLPYDVLARISGRITNEIPEIVRVVLDITPKPPATIEWE</sequence>
<proteinExistence type="inferred from homology"/>
<evidence type="ECO:0000255" key="1">
    <source>
        <dbReference type="HAMAP-Rule" id="MF_00344"/>
    </source>
</evidence>
<accession>Q83ID3</accession>
<comment type="function">
    <text evidence="1">Catalyzes the synthesis of GMP from XMP.</text>
</comment>
<comment type="catalytic activity">
    <reaction evidence="1">
        <text>XMP + L-glutamine + ATP + H2O = GMP + L-glutamate + AMP + diphosphate + 2 H(+)</text>
        <dbReference type="Rhea" id="RHEA:11680"/>
        <dbReference type="ChEBI" id="CHEBI:15377"/>
        <dbReference type="ChEBI" id="CHEBI:15378"/>
        <dbReference type="ChEBI" id="CHEBI:29985"/>
        <dbReference type="ChEBI" id="CHEBI:30616"/>
        <dbReference type="ChEBI" id="CHEBI:33019"/>
        <dbReference type="ChEBI" id="CHEBI:57464"/>
        <dbReference type="ChEBI" id="CHEBI:58115"/>
        <dbReference type="ChEBI" id="CHEBI:58359"/>
        <dbReference type="ChEBI" id="CHEBI:456215"/>
        <dbReference type="EC" id="6.3.5.2"/>
    </reaction>
</comment>
<comment type="pathway">
    <text evidence="1">Purine metabolism; GMP biosynthesis; GMP from XMP (L-Gln route): step 1/1.</text>
</comment>
<comment type="subunit">
    <text evidence="1">Homodimer.</text>
</comment>
<organism>
    <name type="scientific">Tropheryma whipplei (strain TW08/27)</name>
    <name type="common">Whipple's bacillus</name>
    <dbReference type="NCBI Taxonomy" id="218496"/>
    <lineage>
        <taxon>Bacteria</taxon>
        <taxon>Bacillati</taxon>
        <taxon>Actinomycetota</taxon>
        <taxon>Actinomycetes</taxon>
        <taxon>Micrococcales</taxon>
        <taxon>Tropherymataceae</taxon>
        <taxon>Tropheryma</taxon>
    </lineage>
</organism>
<dbReference type="EC" id="6.3.5.2" evidence="1"/>
<dbReference type="EMBL" id="BX251410">
    <property type="protein sequence ID" value="CAD66774.1"/>
    <property type="molecule type" value="Genomic_DNA"/>
</dbReference>
<dbReference type="RefSeq" id="WP_011096055.1">
    <property type="nucleotide sequence ID" value="NC_004551.1"/>
</dbReference>
<dbReference type="SMR" id="Q83ID3"/>
<dbReference type="MEROPS" id="C26.957"/>
<dbReference type="GeneID" id="67387863"/>
<dbReference type="KEGG" id="tws:TW089"/>
<dbReference type="HOGENOM" id="CLU_014340_0_5_11"/>
<dbReference type="UniPathway" id="UPA00189">
    <property type="reaction ID" value="UER00296"/>
</dbReference>
<dbReference type="GO" id="GO:0005829">
    <property type="term" value="C:cytosol"/>
    <property type="evidence" value="ECO:0007669"/>
    <property type="project" value="TreeGrafter"/>
</dbReference>
<dbReference type="GO" id="GO:0005524">
    <property type="term" value="F:ATP binding"/>
    <property type="evidence" value="ECO:0007669"/>
    <property type="project" value="UniProtKB-UniRule"/>
</dbReference>
<dbReference type="GO" id="GO:0003921">
    <property type="term" value="F:GMP synthase activity"/>
    <property type="evidence" value="ECO:0007669"/>
    <property type="project" value="InterPro"/>
</dbReference>
<dbReference type="CDD" id="cd01742">
    <property type="entry name" value="GATase1_GMP_Synthase"/>
    <property type="match status" value="1"/>
</dbReference>
<dbReference type="CDD" id="cd01997">
    <property type="entry name" value="GMP_synthase_C"/>
    <property type="match status" value="1"/>
</dbReference>
<dbReference type="FunFam" id="3.30.300.10:FF:000002">
    <property type="entry name" value="GMP synthase [glutamine-hydrolyzing]"/>
    <property type="match status" value="1"/>
</dbReference>
<dbReference type="Gene3D" id="3.30.300.10">
    <property type="match status" value="1"/>
</dbReference>
<dbReference type="Gene3D" id="3.40.50.880">
    <property type="match status" value="1"/>
</dbReference>
<dbReference type="Gene3D" id="3.40.50.620">
    <property type="entry name" value="HUPs"/>
    <property type="match status" value="1"/>
</dbReference>
<dbReference type="HAMAP" id="MF_00344">
    <property type="entry name" value="GMP_synthase"/>
    <property type="match status" value="1"/>
</dbReference>
<dbReference type="InterPro" id="IPR029062">
    <property type="entry name" value="Class_I_gatase-like"/>
</dbReference>
<dbReference type="InterPro" id="IPR017926">
    <property type="entry name" value="GATASE"/>
</dbReference>
<dbReference type="InterPro" id="IPR001674">
    <property type="entry name" value="GMP_synth_C"/>
</dbReference>
<dbReference type="InterPro" id="IPR004739">
    <property type="entry name" value="GMP_synth_GATase"/>
</dbReference>
<dbReference type="InterPro" id="IPR022955">
    <property type="entry name" value="GMP_synthase"/>
</dbReference>
<dbReference type="InterPro" id="IPR025777">
    <property type="entry name" value="GMPS_ATP_PPase_dom"/>
</dbReference>
<dbReference type="InterPro" id="IPR022310">
    <property type="entry name" value="NAD/GMP_synthase"/>
</dbReference>
<dbReference type="InterPro" id="IPR014729">
    <property type="entry name" value="Rossmann-like_a/b/a_fold"/>
</dbReference>
<dbReference type="NCBIfam" id="TIGR00884">
    <property type="entry name" value="guaA_Cterm"/>
    <property type="match status" value="1"/>
</dbReference>
<dbReference type="NCBIfam" id="TIGR00888">
    <property type="entry name" value="guaA_Nterm"/>
    <property type="match status" value="1"/>
</dbReference>
<dbReference type="NCBIfam" id="NF000848">
    <property type="entry name" value="PRK00074.1"/>
    <property type="match status" value="1"/>
</dbReference>
<dbReference type="PANTHER" id="PTHR11922:SF2">
    <property type="entry name" value="GMP SYNTHASE [GLUTAMINE-HYDROLYZING]"/>
    <property type="match status" value="1"/>
</dbReference>
<dbReference type="PANTHER" id="PTHR11922">
    <property type="entry name" value="GMP SYNTHASE-RELATED"/>
    <property type="match status" value="1"/>
</dbReference>
<dbReference type="Pfam" id="PF00117">
    <property type="entry name" value="GATase"/>
    <property type="match status" value="1"/>
</dbReference>
<dbReference type="Pfam" id="PF00958">
    <property type="entry name" value="GMP_synt_C"/>
    <property type="match status" value="1"/>
</dbReference>
<dbReference type="Pfam" id="PF02540">
    <property type="entry name" value="NAD_synthase"/>
    <property type="match status" value="1"/>
</dbReference>
<dbReference type="PRINTS" id="PR00099">
    <property type="entry name" value="CPSGATASE"/>
</dbReference>
<dbReference type="PRINTS" id="PR00096">
    <property type="entry name" value="GATASE"/>
</dbReference>
<dbReference type="SUPFAM" id="SSF52402">
    <property type="entry name" value="Adenine nucleotide alpha hydrolases-like"/>
    <property type="match status" value="1"/>
</dbReference>
<dbReference type="SUPFAM" id="SSF52317">
    <property type="entry name" value="Class I glutamine amidotransferase-like"/>
    <property type="match status" value="1"/>
</dbReference>
<dbReference type="SUPFAM" id="SSF54810">
    <property type="entry name" value="GMP synthetase C-terminal dimerisation domain"/>
    <property type="match status" value="1"/>
</dbReference>
<dbReference type="PROSITE" id="PS51273">
    <property type="entry name" value="GATASE_TYPE_1"/>
    <property type="match status" value="1"/>
</dbReference>
<dbReference type="PROSITE" id="PS51553">
    <property type="entry name" value="GMPS_ATP_PPASE"/>
    <property type="match status" value="1"/>
</dbReference>
<gene>
    <name evidence="1" type="primary">guaA</name>
    <name type="ordered locus">TW089</name>
</gene>
<name>GUAA_TROW8</name>
<reference key="1">
    <citation type="journal article" date="2003" name="Lancet">
        <title>Sequencing and analysis of the genome of the Whipple's disease bacterium Tropheryma whipplei.</title>
        <authorList>
            <person name="Bentley S.D."/>
            <person name="Maiwald M."/>
            <person name="Murphy L.D."/>
            <person name="Pallen M.J."/>
            <person name="Yeats C.A."/>
            <person name="Dover L.G."/>
            <person name="Norbertczak H.T."/>
            <person name="Besra G.S."/>
            <person name="Quail M.A."/>
            <person name="Harris D.E."/>
            <person name="von Herbay A."/>
            <person name="Goble A."/>
            <person name="Rutter S."/>
            <person name="Squares R."/>
            <person name="Squares S."/>
            <person name="Barrell B.G."/>
            <person name="Parkhill J."/>
            <person name="Relman D.A."/>
        </authorList>
    </citation>
    <scope>NUCLEOTIDE SEQUENCE [LARGE SCALE GENOMIC DNA]</scope>
    <source>
        <strain>TW08/27</strain>
    </source>
</reference>
<feature type="chain" id="PRO_0000140201" description="GMP synthase [glutamine-hydrolyzing]">
    <location>
        <begin position="1"/>
        <end position="503"/>
    </location>
</feature>
<feature type="domain" description="Glutamine amidotransferase type-1" evidence="1">
    <location>
        <begin position="3"/>
        <end position="189"/>
    </location>
</feature>
<feature type="domain" description="GMPS ATP-PPase" evidence="1">
    <location>
        <begin position="190"/>
        <end position="380"/>
    </location>
</feature>
<feature type="active site" description="Nucleophile" evidence="1">
    <location>
        <position position="80"/>
    </location>
</feature>
<feature type="active site" evidence="1">
    <location>
        <position position="165"/>
    </location>
</feature>
<feature type="active site" evidence="1">
    <location>
        <position position="167"/>
    </location>
</feature>
<feature type="binding site" evidence="1">
    <location>
        <begin position="217"/>
        <end position="223"/>
    </location>
    <ligand>
        <name>ATP</name>
        <dbReference type="ChEBI" id="CHEBI:30616"/>
    </ligand>
</feature>